<evidence type="ECO:0000255" key="1">
    <source>
        <dbReference type="HAMAP-Rule" id="MF_00113"/>
    </source>
</evidence>
<gene>
    <name evidence="1" type="primary">queA</name>
    <name type="ordered locus">ESA_02897</name>
</gene>
<keyword id="KW-0963">Cytoplasm</keyword>
<keyword id="KW-0671">Queuosine biosynthesis</keyword>
<keyword id="KW-1185">Reference proteome</keyword>
<keyword id="KW-0949">S-adenosyl-L-methionine</keyword>
<keyword id="KW-0808">Transferase</keyword>
<proteinExistence type="inferred from homology"/>
<accession>A7MEL5</accession>
<reference key="1">
    <citation type="journal article" date="2010" name="PLoS ONE">
        <title>Genome sequence of Cronobacter sakazakii BAA-894 and comparative genomic hybridization analysis with other Cronobacter species.</title>
        <authorList>
            <person name="Kucerova E."/>
            <person name="Clifton S.W."/>
            <person name="Xia X.Q."/>
            <person name="Long F."/>
            <person name="Porwollik S."/>
            <person name="Fulton L."/>
            <person name="Fronick C."/>
            <person name="Minx P."/>
            <person name="Kyung K."/>
            <person name="Warren W."/>
            <person name="Fulton R."/>
            <person name="Feng D."/>
            <person name="Wollam A."/>
            <person name="Shah N."/>
            <person name="Bhonagiri V."/>
            <person name="Nash W.E."/>
            <person name="Hallsworth-Pepin K."/>
            <person name="Wilson R.K."/>
            <person name="McClelland M."/>
            <person name="Forsythe S.J."/>
        </authorList>
    </citation>
    <scope>NUCLEOTIDE SEQUENCE [LARGE SCALE GENOMIC DNA]</scope>
    <source>
        <strain>ATCC BAA-894</strain>
    </source>
</reference>
<dbReference type="EC" id="2.4.99.17" evidence="1"/>
<dbReference type="EMBL" id="CP000783">
    <property type="protein sequence ID" value="ABU78126.1"/>
    <property type="molecule type" value="Genomic_DNA"/>
</dbReference>
<dbReference type="RefSeq" id="WP_012125505.1">
    <property type="nucleotide sequence ID" value="NC_009778.1"/>
</dbReference>
<dbReference type="SMR" id="A7MEL5"/>
<dbReference type="KEGG" id="esa:ESA_02897"/>
<dbReference type="PATRIC" id="fig|290339.8.peg.2588"/>
<dbReference type="HOGENOM" id="CLU_039110_1_0_6"/>
<dbReference type="UniPathway" id="UPA00392"/>
<dbReference type="Proteomes" id="UP000000260">
    <property type="component" value="Chromosome"/>
</dbReference>
<dbReference type="GO" id="GO:0005737">
    <property type="term" value="C:cytoplasm"/>
    <property type="evidence" value="ECO:0007669"/>
    <property type="project" value="UniProtKB-SubCell"/>
</dbReference>
<dbReference type="GO" id="GO:0051075">
    <property type="term" value="F:S-adenosylmethionine:tRNA ribosyltransferase-isomerase activity"/>
    <property type="evidence" value="ECO:0007669"/>
    <property type="project" value="UniProtKB-EC"/>
</dbReference>
<dbReference type="GO" id="GO:0008616">
    <property type="term" value="P:queuosine biosynthetic process"/>
    <property type="evidence" value="ECO:0007669"/>
    <property type="project" value="UniProtKB-UniRule"/>
</dbReference>
<dbReference type="GO" id="GO:0002099">
    <property type="term" value="P:tRNA wobble guanine modification"/>
    <property type="evidence" value="ECO:0007669"/>
    <property type="project" value="TreeGrafter"/>
</dbReference>
<dbReference type="FunFam" id="2.40.10.240:FF:000001">
    <property type="entry name" value="S-adenosylmethionine:tRNA ribosyltransferase-isomerase"/>
    <property type="match status" value="1"/>
</dbReference>
<dbReference type="FunFam" id="3.40.1780.10:FF:000001">
    <property type="entry name" value="S-adenosylmethionine:tRNA ribosyltransferase-isomerase"/>
    <property type="match status" value="1"/>
</dbReference>
<dbReference type="Gene3D" id="2.40.10.240">
    <property type="entry name" value="QueA-like"/>
    <property type="match status" value="1"/>
</dbReference>
<dbReference type="Gene3D" id="3.40.1780.10">
    <property type="entry name" value="QueA-like"/>
    <property type="match status" value="1"/>
</dbReference>
<dbReference type="HAMAP" id="MF_00113">
    <property type="entry name" value="QueA"/>
    <property type="match status" value="1"/>
</dbReference>
<dbReference type="InterPro" id="IPR003699">
    <property type="entry name" value="QueA"/>
</dbReference>
<dbReference type="InterPro" id="IPR042118">
    <property type="entry name" value="QueA_dom1"/>
</dbReference>
<dbReference type="InterPro" id="IPR042119">
    <property type="entry name" value="QueA_dom2"/>
</dbReference>
<dbReference type="InterPro" id="IPR036100">
    <property type="entry name" value="QueA_sf"/>
</dbReference>
<dbReference type="NCBIfam" id="NF001140">
    <property type="entry name" value="PRK00147.1"/>
    <property type="match status" value="1"/>
</dbReference>
<dbReference type="NCBIfam" id="TIGR00113">
    <property type="entry name" value="queA"/>
    <property type="match status" value="1"/>
</dbReference>
<dbReference type="PANTHER" id="PTHR30307">
    <property type="entry name" value="S-ADENOSYLMETHIONINE:TRNA RIBOSYLTRANSFERASE-ISOMERASE"/>
    <property type="match status" value="1"/>
</dbReference>
<dbReference type="PANTHER" id="PTHR30307:SF0">
    <property type="entry name" value="S-ADENOSYLMETHIONINE:TRNA RIBOSYLTRANSFERASE-ISOMERASE"/>
    <property type="match status" value="1"/>
</dbReference>
<dbReference type="Pfam" id="PF02547">
    <property type="entry name" value="Queuosine_synth"/>
    <property type="match status" value="1"/>
</dbReference>
<dbReference type="SUPFAM" id="SSF111337">
    <property type="entry name" value="QueA-like"/>
    <property type="match status" value="1"/>
</dbReference>
<feature type="chain" id="PRO_1000015212" description="S-adenosylmethionine:tRNA ribosyltransferase-isomerase">
    <location>
        <begin position="1"/>
        <end position="356"/>
    </location>
</feature>
<sequence length="356" mass="39373">MRLTDFSFELPESLIAHYPQAQRSACRLLSLDGPTGDLTHGTFTDLLDKLNPGDLLVFNNTRVIPARLFGRKASGGKIEVLVERMLDDHRVLAHIRASKAPKPGAELLLGDDESVNATMTARHDALFEVQFNDARPVLDILNSIGHMPLPPYIERPDEEADRELYQTVYSQKPGAVAAPTAGLHFDEPLLERLRAKGIEMAFVTLHVGAGTFQPVRVESIEDHVMHSEYAEVPQEVVDAVLAAKARGNKVVAVGTTSVRSLESAAQAAQDALIAPFFGDTQIFIYPGYQYKVIDALVTNFHLPESTLIMLVSAFAGYKHTMNAYREAVKAEYRFFSYGDAMYITYNPQAINERPGE</sequence>
<comment type="function">
    <text evidence="1">Transfers and isomerizes the ribose moiety from AdoMet to the 7-aminomethyl group of 7-deazaguanine (preQ1-tRNA) to give epoxyqueuosine (oQ-tRNA).</text>
</comment>
<comment type="catalytic activity">
    <reaction evidence="1">
        <text>7-aminomethyl-7-carbaguanosine(34) in tRNA + S-adenosyl-L-methionine = epoxyqueuosine(34) in tRNA + adenine + L-methionine + 2 H(+)</text>
        <dbReference type="Rhea" id="RHEA:32155"/>
        <dbReference type="Rhea" id="RHEA-COMP:10342"/>
        <dbReference type="Rhea" id="RHEA-COMP:18582"/>
        <dbReference type="ChEBI" id="CHEBI:15378"/>
        <dbReference type="ChEBI" id="CHEBI:16708"/>
        <dbReference type="ChEBI" id="CHEBI:57844"/>
        <dbReference type="ChEBI" id="CHEBI:59789"/>
        <dbReference type="ChEBI" id="CHEBI:82833"/>
        <dbReference type="ChEBI" id="CHEBI:194443"/>
        <dbReference type="EC" id="2.4.99.17"/>
    </reaction>
</comment>
<comment type="pathway">
    <text evidence="1">tRNA modification; tRNA-queuosine biosynthesis.</text>
</comment>
<comment type="subunit">
    <text evidence="1">Monomer.</text>
</comment>
<comment type="subcellular location">
    <subcellularLocation>
        <location evidence="1">Cytoplasm</location>
    </subcellularLocation>
</comment>
<comment type="similarity">
    <text evidence="1">Belongs to the QueA family.</text>
</comment>
<name>QUEA_CROS8</name>
<organism>
    <name type="scientific">Cronobacter sakazakii (strain ATCC BAA-894)</name>
    <name type="common">Enterobacter sakazakii</name>
    <dbReference type="NCBI Taxonomy" id="290339"/>
    <lineage>
        <taxon>Bacteria</taxon>
        <taxon>Pseudomonadati</taxon>
        <taxon>Pseudomonadota</taxon>
        <taxon>Gammaproteobacteria</taxon>
        <taxon>Enterobacterales</taxon>
        <taxon>Enterobacteriaceae</taxon>
        <taxon>Cronobacter</taxon>
    </lineage>
</organism>
<protein>
    <recommendedName>
        <fullName evidence="1">S-adenosylmethionine:tRNA ribosyltransferase-isomerase</fullName>
        <ecNumber evidence="1">2.4.99.17</ecNumber>
    </recommendedName>
    <alternativeName>
        <fullName evidence="1">Queuosine biosynthesis protein QueA</fullName>
    </alternativeName>
</protein>